<proteinExistence type="evidence at transcript level"/>
<dbReference type="EMBL" id="AC068667">
    <property type="protein sequence ID" value="AAG51760.1"/>
    <property type="molecule type" value="Genomic_DNA"/>
</dbReference>
<dbReference type="EMBL" id="CP002684">
    <property type="protein sequence ID" value="AEE31118.1"/>
    <property type="molecule type" value="Genomic_DNA"/>
</dbReference>
<dbReference type="EMBL" id="AY054177">
    <property type="protein sequence ID" value="AAL06838.1"/>
    <property type="status" value="ALT_FRAME"/>
    <property type="molecule type" value="mRNA"/>
</dbReference>
<dbReference type="EMBL" id="AY074857">
    <property type="protein sequence ID" value="AAL75908.1"/>
    <property type="molecule type" value="mRNA"/>
</dbReference>
<dbReference type="EMBL" id="BT030337">
    <property type="protein sequence ID" value="ABO38750.1"/>
    <property type="molecule type" value="mRNA"/>
</dbReference>
<dbReference type="PIR" id="C86420">
    <property type="entry name" value="C86420"/>
</dbReference>
<dbReference type="RefSeq" id="NP_564333.1">
    <property type="nucleotide sequence ID" value="NM_102709.4"/>
</dbReference>
<dbReference type="BioGRID" id="25081">
    <property type="interactions" value="1"/>
</dbReference>
<dbReference type="FunCoup" id="Q9C7N2">
    <property type="interactions" value="1640"/>
</dbReference>
<dbReference type="STRING" id="3702.Q9C7N2"/>
<dbReference type="TCDB" id="1.C.39.11.3">
    <property type="family name" value="the membrane attack complex/perforin (macpf) family"/>
</dbReference>
<dbReference type="iPTMnet" id="Q9C7N2"/>
<dbReference type="PaxDb" id="3702-AT1G29690.1"/>
<dbReference type="ProteomicsDB" id="240275"/>
<dbReference type="EnsemblPlants" id="AT1G29690.1">
    <property type="protein sequence ID" value="AT1G29690.1"/>
    <property type="gene ID" value="AT1G29690"/>
</dbReference>
<dbReference type="GeneID" id="839846"/>
<dbReference type="Gramene" id="AT1G29690.1">
    <property type="protein sequence ID" value="AT1G29690.1"/>
    <property type="gene ID" value="AT1G29690"/>
</dbReference>
<dbReference type="KEGG" id="ath:AT1G29690"/>
<dbReference type="Araport" id="AT1G29690"/>
<dbReference type="TAIR" id="AT1G29690">
    <property type="gene designation" value="CAD1"/>
</dbReference>
<dbReference type="eggNOG" id="ENOG502QRZ9">
    <property type="taxonomic scope" value="Eukaryota"/>
</dbReference>
<dbReference type="HOGENOM" id="CLU_034245_1_0_1"/>
<dbReference type="InParanoid" id="Q9C7N2"/>
<dbReference type="OMA" id="IAQVWAP"/>
<dbReference type="OrthoDB" id="6150863at2759"/>
<dbReference type="PhylomeDB" id="Q9C7N2"/>
<dbReference type="PRO" id="PR:Q9C7N2"/>
<dbReference type="Proteomes" id="UP000006548">
    <property type="component" value="Chromosome 1"/>
</dbReference>
<dbReference type="ExpressionAtlas" id="Q9C7N2">
    <property type="expression patterns" value="baseline and differential"/>
</dbReference>
<dbReference type="GO" id="GO:0008219">
    <property type="term" value="P:cell death"/>
    <property type="evidence" value="ECO:0000315"/>
    <property type="project" value="TAIR"/>
</dbReference>
<dbReference type="GO" id="GO:0006955">
    <property type="term" value="P:immune response"/>
    <property type="evidence" value="ECO:0000315"/>
    <property type="project" value="TAIR"/>
</dbReference>
<dbReference type="GO" id="GO:0009626">
    <property type="term" value="P:plant-type hypersensitive response"/>
    <property type="evidence" value="ECO:0000315"/>
    <property type="project" value="UniProtKB"/>
</dbReference>
<dbReference type="GO" id="GO:2000031">
    <property type="term" value="P:regulation of salicylic acid mediated signaling pathway"/>
    <property type="evidence" value="ECO:0007669"/>
    <property type="project" value="InterPro"/>
</dbReference>
<dbReference type="GO" id="GO:0010337">
    <property type="term" value="P:regulation of salicylic acid metabolic process"/>
    <property type="evidence" value="ECO:0000315"/>
    <property type="project" value="UniProtKB"/>
</dbReference>
<dbReference type="InterPro" id="IPR044663">
    <property type="entry name" value="CAD1/NSL1-like"/>
</dbReference>
<dbReference type="InterPro" id="IPR020864">
    <property type="entry name" value="MACPF"/>
</dbReference>
<dbReference type="PANTHER" id="PTHR33199">
    <property type="entry name" value="MACPF DOMAIN-CONTAINING PROTEIN CAD1"/>
    <property type="match status" value="1"/>
</dbReference>
<dbReference type="PANTHER" id="PTHR33199:SF3">
    <property type="entry name" value="MACPF DOMAIN-CONTAINING PROTEIN CAD1"/>
    <property type="match status" value="1"/>
</dbReference>
<dbReference type="Pfam" id="PF01823">
    <property type="entry name" value="MACPF"/>
    <property type="match status" value="1"/>
</dbReference>
<dbReference type="SMART" id="SM00457">
    <property type="entry name" value="MACPF"/>
    <property type="match status" value="1"/>
</dbReference>
<dbReference type="PROSITE" id="PS51412">
    <property type="entry name" value="MACPF_2"/>
    <property type="match status" value="1"/>
</dbReference>
<evidence type="ECO:0000255" key="1">
    <source>
        <dbReference type="PROSITE-ProRule" id="PRU00745"/>
    </source>
</evidence>
<evidence type="ECO:0000256" key="2">
    <source>
        <dbReference type="SAM" id="MobiDB-lite"/>
    </source>
</evidence>
<evidence type="ECO:0000269" key="3">
    <source>
    </source>
</evidence>
<evidence type="ECO:0000305" key="4"/>
<gene>
    <name type="primary">CAD1</name>
    <name type="ordered locus">At1g29690</name>
    <name type="ORF">F15D2.24</name>
</gene>
<comment type="function">
    <text evidence="3">Negatively controls the salicylic acid (SA)-mediated pathway of programmed cell death in plant immunity.</text>
</comment>
<comment type="tissue specificity">
    <text evidence="3">Mainly expressed in the vascular system.</text>
</comment>
<comment type="disruption phenotype">
    <text evidence="3">Constitutively activated HR-like cell death phenotype with endogenous accumulation of high levels of salicylic acid (SA) and constitutively activated defense phenotype against challenge with P.syringae. Dwarf plant with normal cotyledons, but dark brown- or black-colored cell death lesions on the true leaves.</text>
</comment>
<comment type="similarity">
    <text evidence="4">Belongs to the complement C6/C7/C8/C9 (TC 1.C.39) family.</text>
</comment>
<comment type="sequence caution" evidence="4">
    <conflict type="frameshift">
        <sequence resource="EMBL-CDS" id="AAL06838"/>
    </conflict>
</comment>
<feature type="chain" id="PRO_0000415539" description="MACPF domain-containing protein CAD1">
    <location>
        <begin position="1"/>
        <end position="561"/>
    </location>
</feature>
<feature type="domain" description="MACPF" evidence="1">
    <location>
        <begin position="11"/>
        <end position="314"/>
    </location>
</feature>
<feature type="region of interest" description="Disordered" evidence="2">
    <location>
        <begin position="489"/>
        <end position="514"/>
    </location>
</feature>
<feature type="compositionally biased region" description="Polar residues" evidence="2">
    <location>
        <begin position="500"/>
        <end position="513"/>
    </location>
</feature>
<feature type="sequence conflict" description="In Ref. 3; AAL06838." evidence="4" ref="3">
    <original>R</original>
    <variation>W</variation>
    <location>
        <position position="291"/>
    </location>
</feature>
<accession>Q9C7N2</accession>
<accession>Q940R0</accession>
<name>CAD1_ARATH</name>
<protein>
    <recommendedName>
        <fullName>MACPF domain-containing protein CAD1</fullName>
    </recommendedName>
    <alternativeName>
        <fullName>Protein CONSTITUTIVELY ACTIVATED CELL DEATH 1</fullName>
        <shortName>Protein CAD1</shortName>
    </alternativeName>
</protein>
<keyword id="KW-0381">Hypersensitive response</keyword>
<keyword id="KW-0391">Immunity</keyword>
<keyword id="KW-0399">Innate immunity</keyword>
<keyword id="KW-0611">Plant defense</keyword>
<keyword id="KW-1185">Reference proteome</keyword>
<organism>
    <name type="scientific">Arabidopsis thaliana</name>
    <name type="common">Mouse-ear cress</name>
    <dbReference type="NCBI Taxonomy" id="3702"/>
    <lineage>
        <taxon>Eukaryota</taxon>
        <taxon>Viridiplantae</taxon>
        <taxon>Streptophyta</taxon>
        <taxon>Embryophyta</taxon>
        <taxon>Tracheophyta</taxon>
        <taxon>Spermatophyta</taxon>
        <taxon>Magnoliopsida</taxon>
        <taxon>eudicotyledons</taxon>
        <taxon>Gunneridae</taxon>
        <taxon>Pentapetalae</taxon>
        <taxon>rosids</taxon>
        <taxon>malvids</taxon>
        <taxon>Brassicales</taxon>
        <taxon>Brassicaceae</taxon>
        <taxon>Camelineae</taxon>
        <taxon>Arabidopsis</taxon>
    </lineage>
</organism>
<sequence length="561" mass="62223">MENRKGGNFSVPSSEALTTTLRNAIQALGRGFDVTSDVRLLYCKGAPGSRLVRIEEGQNRDLELSHGFLLPNVPADIDCSRGNSGTQRISVCSFHEMAEEFNVRSGVKGNIPLGCFNAMFNYTGSWQVDAASTKSLALVGYFIPLYDVKLAKLTLVLHNEIRRAVPSSWDPASLASFIENYGTHIVTSVTIGGRDVVYIRQHQSSPLPVSEIENYVNDMIKHRFHEAESQSITGPLKYKDKDITVIFRRRGGDDLEQSHARWAETVPAAPDIINMTFTPIVSLLEGVPGLRHLTRAIELYLEYKPPIEDLQYFLDYQIARAWAPEQSNLQRKEPVCSSLQFSLMGPKLFISADQVTVGRKPVTGLRLSLEGSKQNRLSIHLQHLVSLPKILQPHWDSHVPIGAPKWQGPEEQDSRWFEPIKWKNFSHVSTSPIEHTETHIGDLSGVHIVTGAQLGVWDFGSKNVLHLKLLFSKVPGCTIRRSVWDHTPVASSGRLEPGGPSTSSSTEEVSGQSGKLAKIVDSSEMLKGPQDLPGHWLVTGAKLGVEKGKIVLRVKYSLLNY</sequence>
<reference key="1">
    <citation type="journal article" date="2000" name="Nature">
        <title>Sequence and analysis of chromosome 1 of the plant Arabidopsis thaliana.</title>
        <authorList>
            <person name="Theologis A."/>
            <person name="Ecker J.R."/>
            <person name="Palm C.J."/>
            <person name="Federspiel N.A."/>
            <person name="Kaul S."/>
            <person name="White O."/>
            <person name="Alonso J."/>
            <person name="Altafi H."/>
            <person name="Araujo R."/>
            <person name="Bowman C.L."/>
            <person name="Brooks S.Y."/>
            <person name="Buehler E."/>
            <person name="Chan A."/>
            <person name="Chao Q."/>
            <person name="Chen H."/>
            <person name="Cheuk R.F."/>
            <person name="Chin C.W."/>
            <person name="Chung M.K."/>
            <person name="Conn L."/>
            <person name="Conway A.B."/>
            <person name="Conway A.R."/>
            <person name="Creasy T.H."/>
            <person name="Dewar K."/>
            <person name="Dunn P."/>
            <person name="Etgu P."/>
            <person name="Feldblyum T.V."/>
            <person name="Feng J.-D."/>
            <person name="Fong B."/>
            <person name="Fujii C.Y."/>
            <person name="Gill J.E."/>
            <person name="Goldsmith A.D."/>
            <person name="Haas B."/>
            <person name="Hansen N.F."/>
            <person name="Hughes B."/>
            <person name="Huizar L."/>
            <person name="Hunter J.L."/>
            <person name="Jenkins J."/>
            <person name="Johnson-Hopson C."/>
            <person name="Khan S."/>
            <person name="Khaykin E."/>
            <person name="Kim C.J."/>
            <person name="Koo H.L."/>
            <person name="Kremenetskaia I."/>
            <person name="Kurtz D.B."/>
            <person name="Kwan A."/>
            <person name="Lam B."/>
            <person name="Langin-Hooper S."/>
            <person name="Lee A."/>
            <person name="Lee J.M."/>
            <person name="Lenz C.A."/>
            <person name="Li J.H."/>
            <person name="Li Y.-P."/>
            <person name="Lin X."/>
            <person name="Liu S.X."/>
            <person name="Liu Z.A."/>
            <person name="Luros J.S."/>
            <person name="Maiti R."/>
            <person name="Marziali A."/>
            <person name="Militscher J."/>
            <person name="Miranda M."/>
            <person name="Nguyen M."/>
            <person name="Nierman W.C."/>
            <person name="Osborne B.I."/>
            <person name="Pai G."/>
            <person name="Peterson J."/>
            <person name="Pham P.K."/>
            <person name="Rizzo M."/>
            <person name="Rooney T."/>
            <person name="Rowley D."/>
            <person name="Sakano H."/>
            <person name="Salzberg S.L."/>
            <person name="Schwartz J.R."/>
            <person name="Shinn P."/>
            <person name="Southwick A.M."/>
            <person name="Sun H."/>
            <person name="Tallon L.J."/>
            <person name="Tambunga G."/>
            <person name="Toriumi M.J."/>
            <person name="Town C.D."/>
            <person name="Utterback T."/>
            <person name="Van Aken S."/>
            <person name="Vaysberg M."/>
            <person name="Vysotskaia V.S."/>
            <person name="Walker M."/>
            <person name="Wu D."/>
            <person name="Yu G."/>
            <person name="Fraser C.M."/>
            <person name="Venter J.C."/>
            <person name="Davis R.W."/>
        </authorList>
    </citation>
    <scope>NUCLEOTIDE SEQUENCE [LARGE SCALE GENOMIC DNA]</scope>
    <source>
        <strain>cv. Columbia</strain>
    </source>
</reference>
<reference key="2">
    <citation type="journal article" date="2017" name="Plant J.">
        <title>Araport11: a complete reannotation of the Arabidopsis thaliana reference genome.</title>
        <authorList>
            <person name="Cheng C.Y."/>
            <person name="Krishnakumar V."/>
            <person name="Chan A.P."/>
            <person name="Thibaud-Nissen F."/>
            <person name="Schobel S."/>
            <person name="Town C.D."/>
        </authorList>
    </citation>
    <scope>GENOME REANNOTATION</scope>
    <source>
        <strain>cv. Columbia</strain>
    </source>
</reference>
<reference key="3">
    <citation type="journal article" date="2003" name="Science">
        <title>Empirical analysis of transcriptional activity in the Arabidopsis genome.</title>
        <authorList>
            <person name="Yamada K."/>
            <person name="Lim J."/>
            <person name="Dale J.M."/>
            <person name="Chen H."/>
            <person name="Shinn P."/>
            <person name="Palm C.J."/>
            <person name="Southwick A.M."/>
            <person name="Wu H.C."/>
            <person name="Kim C.J."/>
            <person name="Nguyen M."/>
            <person name="Pham P.K."/>
            <person name="Cheuk R.F."/>
            <person name="Karlin-Newmann G."/>
            <person name="Liu S.X."/>
            <person name="Lam B."/>
            <person name="Sakano H."/>
            <person name="Wu T."/>
            <person name="Yu G."/>
            <person name="Miranda M."/>
            <person name="Quach H.L."/>
            <person name="Tripp M."/>
            <person name="Chang C.H."/>
            <person name="Lee J.M."/>
            <person name="Toriumi M.J."/>
            <person name="Chan M.M."/>
            <person name="Tang C.C."/>
            <person name="Onodera C.S."/>
            <person name="Deng J.M."/>
            <person name="Akiyama K."/>
            <person name="Ansari Y."/>
            <person name="Arakawa T."/>
            <person name="Banh J."/>
            <person name="Banno F."/>
            <person name="Bowser L."/>
            <person name="Brooks S.Y."/>
            <person name="Carninci P."/>
            <person name="Chao Q."/>
            <person name="Choy N."/>
            <person name="Enju A."/>
            <person name="Goldsmith A.D."/>
            <person name="Gurjal M."/>
            <person name="Hansen N.F."/>
            <person name="Hayashizaki Y."/>
            <person name="Johnson-Hopson C."/>
            <person name="Hsuan V.W."/>
            <person name="Iida K."/>
            <person name="Karnes M."/>
            <person name="Khan S."/>
            <person name="Koesema E."/>
            <person name="Ishida J."/>
            <person name="Jiang P.X."/>
            <person name="Jones T."/>
            <person name="Kawai J."/>
            <person name="Kamiya A."/>
            <person name="Meyers C."/>
            <person name="Nakajima M."/>
            <person name="Narusaka M."/>
            <person name="Seki M."/>
            <person name="Sakurai T."/>
            <person name="Satou M."/>
            <person name="Tamse R."/>
            <person name="Vaysberg M."/>
            <person name="Wallender E.K."/>
            <person name="Wong C."/>
            <person name="Yamamura Y."/>
            <person name="Yuan S."/>
            <person name="Shinozaki K."/>
            <person name="Davis R.W."/>
            <person name="Theologis A."/>
            <person name="Ecker J.R."/>
        </authorList>
    </citation>
    <scope>NUCLEOTIDE SEQUENCE [LARGE SCALE MRNA]</scope>
    <source>
        <strain>cv. Columbia</strain>
    </source>
</reference>
<reference key="4">
    <citation type="submission" date="2007-03" db="EMBL/GenBank/DDBJ databases">
        <title>Arabidopsis ORF clones.</title>
        <authorList>
            <person name="Bautista V.R."/>
            <person name="Kim C.J."/>
            <person name="Chen H."/>
            <person name="Wu S.Y."/>
            <person name="De Los Reyes C."/>
            <person name="Ecker J.R."/>
        </authorList>
    </citation>
    <scope>NUCLEOTIDE SEQUENCE [LARGE SCALE MRNA]</scope>
    <source>
        <strain>cv. Columbia</strain>
    </source>
</reference>
<reference key="5">
    <citation type="journal article" date="2005" name="Plant Cell Physiol.">
        <title>The Arabidopsis gene CAD1 controls programmed cell death in the plant immune system and encodes a protein containing a MACPF domain.</title>
        <authorList>
            <person name="Morita-Yamamuro C."/>
            <person name="Tsutsui T."/>
            <person name="Sato M."/>
            <person name="Yoshioka H."/>
            <person name="Tamaoki M."/>
            <person name="Ogawa D."/>
            <person name="Matsuura H."/>
            <person name="Yoshihara T."/>
            <person name="Ikeda A."/>
            <person name="Uyeda I."/>
            <person name="Yamaguchi J."/>
        </authorList>
    </citation>
    <scope>FUNCTION</scope>
    <scope>DISRUPTION PHENOTYPE</scope>
    <scope>TISSUE SPECIFICITY</scope>
</reference>
<reference key="6">
    <citation type="journal article" date="2006" name="Plant Mol. Biol.">
        <title>Loss of Necrotic Spotted Lesions 1 associates with cell death and defense responses in Arabidopsis thaliana.</title>
        <authorList>
            <person name="Noutoshi Y."/>
            <person name="Kuromori T."/>
            <person name="Wada T."/>
            <person name="Hirayama T."/>
            <person name="Kamiya A."/>
            <person name="Imura Y."/>
            <person name="Yasuda M."/>
            <person name="Nakashita H."/>
            <person name="Shirasu K."/>
            <person name="Shinozaki K."/>
        </authorList>
    </citation>
    <scope>GENE FAMILY</scope>
</reference>